<accession>P0DJA7</accession>
<accession>P22632</accession>
<accession>P35636</accession>
<accession>Q5NNZ4</accession>
<accession>Q84CM3</accession>
<comment type="catalytic activity">
    <reaction evidence="2">
        <text>Hydrolysis of terminal non-reducing beta-D-fructofuranoside residues in beta-D-fructofuranosides.</text>
        <dbReference type="EC" id="3.2.1.26"/>
    </reaction>
</comment>
<comment type="pathway">
    <text>Glycan biosynthesis; sucrose metabolism.</text>
</comment>
<comment type="subcellular location">
    <subcellularLocation>
        <location>Cytoplasm</location>
    </subcellularLocation>
</comment>
<comment type="similarity">
    <text evidence="3">Belongs to the glycosyl hydrolase 32 family.</text>
</comment>
<keyword id="KW-0119">Carbohydrate metabolism</keyword>
<keyword id="KW-0963">Cytoplasm</keyword>
<keyword id="KW-0903">Direct protein sequencing</keyword>
<keyword id="KW-0326">Glycosidase</keyword>
<keyword id="KW-0378">Hydrolase</keyword>
<keyword id="KW-1185">Reference proteome</keyword>
<proteinExistence type="evidence at protein level"/>
<gene>
    <name type="primary">sacA</name>
    <name type="synonym">invA</name>
    <name type="ordered locus">ZMO0942</name>
</gene>
<dbReference type="EC" id="3.2.1.26"/>
<dbReference type="EMBL" id="D10465">
    <property type="protein sequence ID" value="BAA01258.1"/>
    <property type="molecule type" value="Genomic_DNA"/>
</dbReference>
<dbReference type="EMBL" id="AY171597">
    <property type="protein sequence ID" value="AAO38865.1"/>
    <property type="molecule type" value="Genomic_DNA"/>
</dbReference>
<dbReference type="EMBL" id="AE008692">
    <property type="protein sequence ID" value="AAV89566.1"/>
    <property type="molecule type" value="Genomic_DNA"/>
</dbReference>
<dbReference type="PIR" id="JU0460">
    <property type="entry name" value="JU0460"/>
</dbReference>
<dbReference type="RefSeq" id="WP_011240801.1">
    <property type="nucleotide sequence ID" value="NZ_CP035711.1"/>
</dbReference>
<dbReference type="SMR" id="P0DJA7"/>
<dbReference type="STRING" id="264203.ZMO0942"/>
<dbReference type="CAZy" id="GH32">
    <property type="family name" value="Glycoside Hydrolase Family 32"/>
</dbReference>
<dbReference type="KEGG" id="zmo:ZMO0942"/>
<dbReference type="eggNOG" id="COG1621">
    <property type="taxonomic scope" value="Bacteria"/>
</dbReference>
<dbReference type="HOGENOM" id="CLU_001528_7_0_5"/>
<dbReference type="UniPathway" id="UPA00238"/>
<dbReference type="Proteomes" id="UP000001173">
    <property type="component" value="Chromosome"/>
</dbReference>
<dbReference type="GO" id="GO:0005737">
    <property type="term" value="C:cytoplasm"/>
    <property type="evidence" value="ECO:0007669"/>
    <property type="project" value="UniProtKB-SubCell"/>
</dbReference>
<dbReference type="GO" id="GO:0004564">
    <property type="term" value="F:beta-fructofuranosidase activity"/>
    <property type="evidence" value="ECO:0007669"/>
    <property type="project" value="UniProtKB-EC"/>
</dbReference>
<dbReference type="GO" id="GO:0005985">
    <property type="term" value="P:sucrose metabolic process"/>
    <property type="evidence" value="ECO:0007669"/>
    <property type="project" value="UniProtKB-UniPathway"/>
</dbReference>
<dbReference type="CDD" id="cd08996">
    <property type="entry name" value="GH32_FFase"/>
    <property type="match status" value="1"/>
</dbReference>
<dbReference type="Gene3D" id="2.60.120.560">
    <property type="entry name" value="Exo-inulinase, domain 1"/>
    <property type="match status" value="1"/>
</dbReference>
<dbReference type="Gene3D" id="2.115.10.20">
    <property type="entry name" value="Glycosyl hydrolase domain, family 43"/>
    <property type="match status" value="1"/>
</dbReference>
<dbReference type="InterPro" id="IPR013320">
    <property type="entry name" value="ConA-like_dom_sf"/>
</dbReference>
<dbReference type="InterPro" id="IPR051214">
    <property type="entry name" value="GH32_Enzymes"/>
</dbReference>
<dbReference type="InterPro" id="IPR001362">
    <property type="entry name" value="Glyco_hydro_32"/>
</dbReference>
<dbReference type="InterPro" id="IPR018053">
    <property type="entry name" value="Glyco_hydro_32_AS"/>
</dbReference>
<dbReference type="InterPro" id="IPR013189">
    <property type="entry name" value="Glyco_hydro_32_C"/>
</dbReference>
<dbReference type="InterPro" id="IPR013148">
    <property type="entry name" value="Glyco_hydro_32_N"/>
</dbReference>
<dbReference type="InterPro" id="IPR023296">
    <property type="entry name" value="Glyco_hydro_beta-prop_sf"/>
</dbReference>
<dbReference type="InterPro" id="IPR006232">
    <property type="entry name" value="Suc6P_hydrolase"/>
</dbReference>
<dbReference type="NCBIfam" id="TIGR01322">
    <property type="entry name" value="scrB_fam"/>
    <property type="match status" value="1"/>
</dbReference>
<dbReference type="PANTHER" id="PTHR43101">
    <property type="entry name" value="BETA-FRUCTOSIDASE"/>
    <property type="match status" value="1"/>
</dbReference>
<dbReference type="PANTHER" id="PTHR43101:SF1">
    <property type="entry name" value="BETA-FRUCTOSIDASE"/>
    <property type="match status" value="1"/>
</dbReference>
<dbReference type="Pfam" id="PF08244">
    <property type="entry name" value="Glyco_hydro_32C"/>
    <property type="match status" value="1"/>
</dbReference>
<dbReference type="Pfam" id="PF00251">
    <property type="entry name" value="Glyco_hydro_32N"/>
    <property type="match status" value="1"/>
</dbReference>
<dbReference type="SMART" id="SM00640">
    <property type="entry name" value="Glyco_32"/>
    <property type="match status" value="1"/>
</dbReference>
<dbReference type="SUPFAM" id="SSF75005">
    <property type="entry name" value="Arabinanase/levansucrase/invertase"/>
    <property type="match status" value="1"/>
</dbReference>
<dbReference type="SUPFAM" id="SSF49899">
    <property type="entry name" value="Concanavalin A-like lectins/glucanases"/>
    <property type="match status" value="1"/>
</dbReference>
<dbReference type="PROSITE" id="PS00609">
    <property type="entry name" value="GLYCOSYL_HYDROL_F32"/>
    <property type="match status" value="1"/>
</dbReference>
<feature type="chain" id="PRO_0000169880" description="Sucrose-6-phosphate hydrolase">
    <location>
        <begin position="1"/>
        <end position="512"/>
    </location>
</feature>
<feature type="active site" evidence="2">
    <location>
        <position position="43"/>
    </location>
</feature>
<feature type="binding site" evidence="1">
    <location>
        <begin position="40"/>
        <end position="43"/>
    </location>
    <ligand>
        <name>substrate</name>
    </ligand>
</feature>
<feature type="binding site" evidence="1">
    <location>
        <position position="59"/>
    </location>
    <ligand>
        <name>substrate</name>
    </ligand>
</feature>
<feature type="binding site" evidence="1">
    <location>
        <position position="67"/>
    </location>
    <ligand>
        <name>substrate</name>
    </ligand>
</feature>
<feature type="binding site" evidence="1">
    <location>
        <begin position="102"/>
        <end position="103"/>
    </location>
    <ligand>
        <name>substrate</name>
    </ligand>
</feature>
<feature type="binding site" evidence="1">
    <location>
        <begin position="165"/>
        <end position="166"/>
    </location>
    <ligand>
        <name>substrate</name>
    </ligand>
</feature>
<feature type="binding site" evidence="1">
    <location>
        <position position="229"/>
    </location>
    <ligand>
        <name>substrate</name>
    </ligand>
</feature>
<feature type="binding site" evidence="1">
    <location>
        <position position="311"/>
    </location>
    <ligand>
        <name>substrate</name>
    </ligand>
</feature>
<feature type="sequence conflict" description="In Ref. 1; BAA01258." evidence="3" ref="1">
    <original>L</original>
    <variation>V</variation>
    <location>
        <position position="24"/>
    </location>
</feature>
<feature type="sequence conflict" description="In Ref. 2; AAO38865." evidence="3" ref="2">
    <original>S</original>
    <variation>L</variation>
    <location>
        <position position="95"/>
    </location>
</feature>
<feature type="sequence conflict" description="In Ref. 1; BAA01258." evidence="3" ref="1">
    <original>V</original>
    <variation>I</variation>
    <location>
        <position position="112"/>
    </location>
</feature>
<feature type="sequence conflict" description="In Ref. 1; BAA01258 and 2; AAO38865." evidence="3" ref="1 2">
    <original>L</original>
    <variation>P</variation>
    <location>
        <position position="128"/>
    </location>
</feature>
<feature type="sequence conflict" description="In Ref. 1; BAA01258." evidence="3" ref="1">
    <original>V</original>
    <variation>I</variation>
    <location>
        <position position="152"/>
    </location>
</feature>
<feature type="sequence conflict" description="In Ref. 1; BAA01258." evidence="3" ref="1">
    <original>A</original>
    <variation>P</variation>
    <location>
        <position position="156"/>
    </location>
</feature>
<feature type="sequence conflict" description="In Ref. 1; BAA01258 and 2; AAO38865." evidence="3" ref="1 2">
    <original>N</original>
    <variation>D</variation>
    <location>
        <position position="174"/>
    </location>
</feature>
<feature type="sequence conflict" description="In Ref. 1; BAA01258." evidence="3" ref="1">
    <original>H</original>
    <variation>R</variation>
    <location>
        <position position="175"/>
    </location>
</feature>
<feature type="sequence conflict" description="In Ref. 1; BAA01258." evidence="3" ref="1">
    <original>A</original>
    <variation>D</variation>
    <location>
        <position position="297"/>
    </location>
</feature>
<feature type="sequence conflict" description="In Ref. 1; BAA01258." evidence="3" ref="1">
    <original>M</original>
    <variation>I</variation>
    <location>
        <position position="371"/>
    </location>
</feature>
<feature type="sequence conflict" description="In Ref. 1; BAA01258." evidence="3" ref="1">
    <original>G</original>
    <variation>D</variation>
    <location>
        <position position="400"/>
    </location>
</feature>
<feature type="sequence conflict" description="In Ref. 1; BAA01258." evidence="3" ref="1">
    <original>S</original>
    <variation>L</variation>
    <location>
        <position position="508"/>
    </location>
</feature>
<protein>
    <recommendedName>
        <fullName>Sucrose-6-phosphate hydrolase</fullName>
        <shortName>Sucrase</shortName>
        <ecNumber>3.2.1.26</ecNumber>
    </recommendedName>
    <alternativeName>
        <fullName>Invertase</fullName>
    </alternativeName>
</protein>
<sequence length="512" mass="58575">MESPSYKNLIKAEDAQKKAGKRLLSSEWYPGFHVTPLTGWMNDPNGLIFFKGEYHLFYQYYPFAPVWGPMHWGHAKSRDLVHWETLPVALAPGDSFDRDGCFSGCAVDNNGVLTLIYTGHIVLSNDSLDAIREVQCMATSIDGIHFQKEGIVLEKAPMPQVAHFRDPRVWKENNHWFMVVGYRTDDEKHQGIGHVALYRSENLKDWIFVKTLLGDNSQLPLGKRAFMWECPDFFSLGNRSVLMFSPQGLKASGYKNRNLFQNGYILGKWQAPQFTPETSFQELDYGHDFYAAQRFEAKDGRQILIAWFDMWENQKPSQRDGWAGCMTLPRKLDLIDNKIVMTPVREMEILRQSEKIESVVTLSDAEHPFTMDSPLQEIELIFDLEKSSAYQAGLALRCNGKGQETLLYIDRSQNRIILDRNRSGQNVKGIRSCPLPNTSKVRLHIFLDRSSIEIFVGDDQTQGLYSISSRIFPDKDSLKGRLFAIEGYAVFDSFKRWTLQDANLAAFSSDAC</sequence>
<reference key="1">
    <citation type="journal article" date="1991" name="Agric. Biol. Chem.">
        <title>Cloning, sequencing, and characterization of the intracellular invertase gene from Zymomonas mobilis.</title>
        <authorList>
            <person name="Yanase H."/>
            <person name="Fukushi H."/>
            <person name="Ueda N."/>
            <person name="Maeda Y."/>
            <person name="Toyoda A."/>
            <person name="Tonomura K."/>
        </authorList>
    </citation>
    <scope>NUCLEOTIDE SEQUENCE [GENOMIC DNA]</scope>
    <scope>PROTEIN SEQUENCE OF 1-20</scope>
    <source>
        <strain>Z6C</strain>
    </source>
</reference>
<reference key="2">
    <citation type="submission" date="2002-10" db="EMBL/GenBank/DDBJ databases">
        <title>Sequence of a probable nucleotide sugar epimerase and guanine deaminase from Zymomonas mobilis.</title>
        <authorList>
            <person name="O'Mullan P.J."/>
            <person name="Chase T. Jr."/>
            <person name="Eveleigh D.E."/>
        </authorList>
    </citation>
    <scope>NUCLEOTIDE SEQUENCE [GENOMIC DNA]</scope>
</reference>
<reference key="3">
    <citation type="journal article" date="2005" name="Nat. Biotechnol.">
        <title>The genome sequence of the ethanologenic bacterium Zymomonas mobilis ZM4.</title>
        <authorList>
            <person name="Seo J.-S."/>
            <person name="Chong H."/>
            <person name="Park H.S."/>
            <person name="Yoon K.-O."/>
            <person name="Jung C."/>
            <person name="Kim J.J."/>
            <person name="Hong J.H."/>
            <person name="Kim H."/>
            <person name="Kim J.-H."/>
            <person name="Kil J.-I."/>
            <person name="Park C.J."/>
            <person name="Oh H.-M."/>
            <person name="Lee J.-S."/>
            <person name="Jin S.-J."/>
            <person name="Um H.-W."/>
            <person name="Lee H.-J."/>
            <person name="Oh S.-J."/>
            <person name="Kim J.Y."/>
            <person name="Kang H.L."/>
            <person name="Lee S.Y."/>
            <person name="Lee K.J."/>
            <person name="Kang H.S."/>
        </authorList>
    </citation>
    <scope>NUCLEOTIDE SEQUENCE [LARGE SCALE GENOMIC DNA]</scope>
    <source>
        <strain>ATCC 31821 / ZM4 / CP4</strain>
    </source>
</reference>
<evidence type="ECO:0000250" key="1"/>
<evidence type="ECO:0000255" key="2">
    <source>
        <dbReference type="PROSITE-ProRule" id="PRU10067"/>
    </source>
</evidence>
<evidence type="ECO:0000305" key="3"/>
<organism>
    <name type="scientific">Zymomonas mobilis subsp. mobilis (strain ATCC 31821 / ZM4 / CP4)</name>
    <dbReference type="NCBI Taxonomy" id="264203"/>
    <lineage>
        <taxon>Bacteria</taxon>
        <taxon>Pseudomonadati</taxon>
        <taxon>Pseudomonadota</taxon>
        <taxon>Alphaproteobacteria</taxon>
        <taxon>Sphingomonadales</taxon>
        <taxon>Zymomonadaceae</taxon>
        <taxon>Zymomonas</taxon>
    </lineage>
</organism>
<name>SCR_ZYMMO</name>